<protein>
    <recommendedName>
        <fullName evidence="1">Serum amyloid P-component</fullName>
    </recommendedName>
    <alternativeName>
        <fullName evidence="4">Agarose-binding protein</fullName>
        <shortName evidence="4">Al-ABP</shortName>
    </alternativeName>
</protein>
<accession>P86694</accession>
<evidence type="ECO:0000250" key="1">
    <source>
        <dbReference type="UniProtKB" id="P02743"/>
    </source>
</evidence>
<evidence type="ECO:0000255" key="2"/>
<evidence type="ECO:0000269" key="3">
    <source>
    </source>
</evidence>
<evidence type="ECO:0000303" key="4">
    <source>
    </source>
</evidence>
<evidence type="ECO:0000305" key="5"/>
<sequence length="30" mass="3312">APQDLSGKMFIFPQETSTANVXLTARSQDF</sequence>
<feature type="chain" id="PRO_0000397212" description="Serum amyloid P-component">
    <location>
        <begin position="1"/>
        <end position="30" status="greater than"/>
    </location>
</feature>
<feature type="domain" description="Pentraxin (PTX)" evidence="2">
    <location>
        <begin position="1"/>
        <end position="30" status="greater than"/>
    </location>
</feature>
<feature type="unsure residue" evidence="3">
    <location>
        <position position="27"/>
    </location>
</feature>
<feature type="unsure residue" evidence="3">
    <location>
        <position position="28"/>
    </location>
</feature>
<feature type="unsure residue" evidence="3">
    <location>
        <position position="29"/>
    </location>
</feature>
<feature type="non-terminal residue" evidence="4">
    <location>
        <position position="30"/>
    </location>
</feature>
<proteinExistence type="evidence at protein level"/>
<organism>
    <name type="scientific">Anarhichas lupus</name>
    <name type="common">Atlantic wolffish</name>
    <dbReference type="NCBI Taxonomy" id="8204"/>
    <lineage>
        <taxon>Eukaryota</taxon>
        <taxon>Metazoa</taxon>
        <taxon>Chordata</taxon>
        <taxon>Craniata</taxon>
        <taxon>Vertebrata</taxon>
        <taxon>Euteleostomi</taxon>
        <taxon>Actinopterygii</taxon>
        <taxon>Neopterygii</taxon>
        <taxon>Teleostei</taxon>
        <taxon>Neoteleostei</taxon>
        <taxon>Acanthomorphata</taxon>
        <taxon>Eupercaria</taxon>
        <taxon>Perciformes</taxon>
        <taxon>Cottioidei</taxon>
        <taxon>Zoarcales</taxon>
        <taxon>Anarhichadidae</taxon>
        <taxon>Anarhichas</taxon>
    </lineage>
</organism>
<reference evidence="5" key="1">
    <citation type="journal article" date="1998" name="Dev. Comp. Immunol.">
        <title>A comparative study of pentraxin-like proteins in different fish species.</title>
        <authorList>
            <person name="Lund V."/>
            <person name="Olafsen J.A."/>
        </authorList>
    </citation>
    <scope>PROTEIN SEQUENCE</scope>
    <scope>COFACTOR</scope>
    <scope>SUBUNIT</scope>
    <scope>SUBCELLULAR LOCATION</scope>
    <source>
        <tissue evidence="3">Serum</tissue>
    </source>
</reference>
<dbReference type="GO" id="GO:0005576">
    <property type="term" value="C:extracellular region"/>
    <property type="evidence" value="ECO:0007669"/>
    <property type="project" value="UniProtKB-SubCell"/>
</dbReference>
<dbReference type="GO" id="GO:0030246">
    <property type="term" value="F:carbohydrate binding"/>
    <property type="evidence" value="ECO:0007669"/>
    <property type="project" value="UniProtKB-KW"/>
</dbReference>
<dbReference type="GO" id="GO:0046872">
    <property type="term" value="F:metal ion binding"/>
    <property type="evidence" value="ECO:0007669"/>
    <property type="project" value="UniProtKB-KW"/>
</dbReference>
<name>SAMP_ANALU</name>
<comment type="cofactor">
    <cofactor evidence="1 3">
        <name>Ca(2+)</name>
        <dbReference type="ChEBI" id="CHEBI:29108"/>
    </cofactor>
    <text evidence="1 3">Binds 2 calcium ions per subunit.</text>
</comment>
<comment type="subunit">
    <text evidence="1 3">Homopentamer. Discoid arrangement of 5 covalently bound subunits.</text>
</comment>
<comment type="subcellular location">
    <subcellularLocation>
        <location evidence="3">Secreted</location>
    </subcellularLocation>
</comment>
<comment type="similarity">
    <text evidence="2">Belongs to the pentraxin family.</text>
</comment>
<keyword id="KW-0034">Amyloid</keyword>
<keyword id="KW-0106">Calcium</keyword>
<keyword id="KW-0903">Direct protein sequencing</keyword>
<keyword id="KW-0430">Lectin</keyword>
<keyword id="KW-0479">Metal-binding</keyword>
<keyword id="KW-0964">Secreted</keyword>